<gene>
    <name evidence="1" type="primary">dapA</name>
    <name type="ordered locus">ECH74115_3700</name>
</gene>
<feature type="chain" id="PRO_1000124028" description="4-hydroxy-tetrahydrodipicolinate synthase">
    <location>
        <begin position="1"/>
        <end position="292"/>
    </location>
</feature>
<feature type="active site" description="Proton donor/acceptor" evidence="1">
    <location>
        <position position="133"/>
    </location>
</feature>
<feature type="active site" description="Schiff-base intermediate with substrate" evidence="1">
    <location>
        <position position="161"/>
    </location>
</feature>
<feature type="binding site" evidence="1">
    <location>
        <position position="45"/>
    </location>
    <ligand>
        <name>pyruvate</name>
        <dbReference type="ChEBI" id="CHEBI:15361"/>
    </ligand>
</feature>
<feature type="binding site" evidence="1">
    <location>
        <position position="203"/>
    </location>
    <ligand>
        <name>pyruvate</name>
        <dbReference type="ChEBI" id="CHEBI:15361"/>
    </ligand>
</feature>
<feature type="site" description="Part of a proton relay during catalysis" evidence="1">
    <location>
        <position position="44"/>
    </location>
</feature>
<feature type="site" description="Part of a proton relay during catalysis" evidence="1">
    <location>
        <position position="107"/>
    </location>
</feature>
<proteinExistence type="inferred from homology"/>
<protein>
    <recommendedName>
        <fullName evidence="1">4-hydroxy-tetrahydrodipicolinate synthase</fullName>
        <shortName evidence="1">HTPA synthase</shortName>
        <ecNumber evidence="1">4.3.3.7</ecNumber>
    </recommendedName>
</protein>
<dbReference type="EC" id="4.3.3.7" evidence="1"/>
<dbReference type="EMBL" id="CP001164">
    <property type="protein sequence ID" value="ACI35503.1"/>
    <property type="molecule type" value="Genomic_DNA"/>
</dbReference>
<dbReference type="RefSeq" id="WP_001295469.1">
    <property type="nucleotide sequence ID" value="NC_011353.1"/>
</dbReference>
<dbReference type="SMR" id="B5Z015"/>
<dbReference type="GeneID" id="93774660"/>
<dbReference type="KEGG" id="ecf:ECH74115_3700"/>
<dbReference type="HOGENOM" id="CLU_049343_7_1_6"/>
<dbReference type="UniPathway" id="UPA00034">
    <property type="reaction ID" value="UER00017"/>
</dbReference>
<dbReference type="GO" id="GO:0005829">
    <property type="term" value="C:cytosol"/>
    <property type="evidence" value="ECO:0007669"/>
    <property type="project" value="TreeGrafter"/>
</dbReference>
<dbReference type="GO" id="GO:0008840">
    <property type="term" value="F:4-hydroxy-tetrahydrodipicolinate synthase activity"/>
    <property type="evidence" value="ECO:0007669"/>
    <property type="project" value="UniProtKB-UniRule"/>
</dbReference>
<dbReference type="GO" id="GO:0019877">
    <property type="term" value="P:diaminopimelate biosynthetic process"/>
    <property type="evidence" value="ECO:0007669"/>
    <property type="project" value="UniProtKB-UniRule"/>
</dbReference>
<dbReference type="GO" id="GO:0009089">
    <property type="term" value="P:lysine biosynthetic process via diaminopimelate"/>
    <property type="evidence" value="ECO:0007669"/>
    <property type="project" value="UniProtKB-UniRule"/>
</dbReference>
<dbReference type="CDD" id="cd00950">
    <property type="entry name" value="DHDPS"/>
    <property type="match status" value="1"/>
</dbReference>
<dbReference type="FunFam" id="3.20.20.70:FF:000046">
    <property type="entry name" value="4-hydroxy-tetrahydrodipicolinate synthase"/>
    <property type="match status" value="1"/>
</dbReference>
<dbReference type="Gene3D" id="3.20.20.70">
    <property type="entry name" value="Aldolase class I"/>
    <property type="match status" value="1"/>
</dbReference>
<dbReference type="HAMAP" id="MF_00418">
    <property type="entry name" value="DapA"/>
    <property type="match status" value="1"/>
</dbReference>
<dbReference type="InterPro" id="IPR013785">
    <property type="entry name" value="Aldolase_TIM"/>
</dbReference>
<dbReference type="InterPro" id="IPR005263">
    <property type="entry name" value="DapA"/>
</dbReference>
<dbReference type="InterPro" id="IPR002220">
    <property type="entry name" value="DapA-like"/>
</dbReference>
<dbReference type="InterPro" id="IPR020625">
    <property type="entry name" value="Schiff_base-form_aldolases_AS"/>
</dbReference>
<dbReference type="InterPro" id="IPR020624">
    <property type="entry name" value="Schiff_base-form_aldolases_CS"/>
</dbReference>
<dbReference type="NCBIfam" id="TIGR00674">
    <property type="entry name" value="dapA"/>
    <property type="match status" value="1"/>
</dbReference>
<dbReference type="PANTHER" id="PTHR12128:SF66">
    <property type="entry name" value="4-HYDROXY-2-OXOGLUTARATE ALDOLASE, MITOCHONDRIAL"/>
    <property type="match status" value="1"/>
</dbReference>
<dbReference type="PANTHER" id="PTHR12128">
    <property type="entry name" value="DIHYDRODIPICOLINATE SYNTHASE"/>
    <property type="match status" value="1"/>
</dbReference>
<dbReference type="Pfam" id="PF00701">
    <property type="entry name" value="DHDPS"/>
    <property type="match status" value="1"/>
</dbReference>
<dbReference type="PIRSF" id="PIRSF001365">
    <property type="entry name" value="DHDPS"/>
    <property type="match status" value="1"/>
</dbReference>
<dbReference type="PRINTS" id="PR00146">
    <property type="entry name" value="DHPICSNTHASE"/>
</dbReference>
<dbReference type="SMART" id="SM01130">
    <property type="entry name" value="DHDPS"/>
    <property type="match status" value="1"/>
</dbReference>
<dbReference type="SUPFAM" id="SSF51569">
    <property type="entry name" value="Aldolase"/>
    <property type="match status" value="1"/>
</dbReference>
<dbReference type="PROSITE" id="PS00665">
    <property type="entry name" value="DHDPS_1"/>
    <property type="match status" value="1"/>
</dbReference>
<dbReference type="PROSITE" id="PS00666">
    <property type="entry name" value="DHDPS_2"/>
    <property type="match status" value="1"/>
</dbReference>
<comment type="function">
    <text evidence="1">Catalyzes the condensation of (S)-aspartate-beta-semialdehyde [(S)-ASA] and pyruvate to 4-hydroxy-tetrahydrodipicolinate (HTPA).</text>
</comment>
<comment type="catalytic activity">
    <reaction evidence="1">
        <text>L-aspartate 4-semialdehyde + pyruvate = (2S,4S)-4-hydroxy-2,3,4,5-tetrahydrodipicolinate + H2O + H(+)</text>
        <dbReference type="Rhea" id="RHEA:34171"/>
        <dbReference type="ChEBI" id="CHEBI:15361"/>
        <dbReference type="ChEBI" id="CHEBI:15377"/>
        <dbReference type="ChEBI" id="CHEBI:15378"/>
        <dbReference type="ChEBI" id="CHEBI:67139"/>
        <dbReference type="ChEBI" id="CHEBI:537519"/>
        <dbReference type="EC" id="4.3.3.7"/>
    </reaction>
</comment>
<comment type="pathway">
    <text evidence="1">Amino-acid biosynthesis; L-lysine biosynthesis via DAP pathway; (S)-tetrahydrodipicolinate from L-aspartate: step 3/4.</text>
</comment>
<comment type="subunit">
    <text evidence="1">Homotetramer; dimer of dimers.</text>
</comment>
<comment type="subcellular location">
    <subcellularLocation>
        <location evidence="1">Cytoplasm</location>
    </subcellularLocation>
</comment>
<comment type="similarity">
    <text evidence="1">Belongs to the DapA family.</text>
</comment>
<comment type="caution">
    <text evidence="2">Was originally thought to be a dihydrodipicolinate synthase (DHDPS), catalyzing the condensation of (S)-aspartate-beta-semialdehyde [(S)-ASA] and pyruvate to dihydrodipicolinate (DHDP). However, it was shown in E.coli that the product of the enzymatic reaction is not dihydrodipicolinate but in fact (4S)-4-hydroxy-2,3,4,5-tetrahydro-(2S)-dipicolinic acid (HTPA), and that the consecutive dehydration reaction leading to DHDP is not spontaneous but catalyzed by DapB.</text>
</comment>
<sequence length="292" mass="31284">MFTGSIVAIVTPMDEKGNVCRASLKKLIDYHVASGTSAIVSVGTTGESATLNHDEHADVVMMTLELADGRIPVIAGTGANATAEAISLTQRFNDSGIVGCLTVTPYYNRPSQEGLYQHFKAIAEHTDLPQILYNVPSRTGCDLLPETVGRLAKVKNIIGIKEATGNLTRVNQIKELVSDDFVLLSGDDASALDFMQLGGHGVISVTANVAARDMAQMCKLAAEGHFAEARVINQRLMPLHNKLFVEPNPIPVKWACKELGLVATDTLRLPMTPITDSGRETVRAALKHAGLL</sequence>
<keyword id="KW-0028">Amino-acid biosynthesis</keyword>
<keyword id="KW-0963">Cytoplasm</keyword>
<keyword id="KW-0220">Diaminopimelate biosynthesis</keyword>
<keyword id="KW-0456">Lyase</keyword>
<keyword id="KW-0457">Lysine biosynthesis</keyword>
<keyword id="KW-0704">Schiff base</keyword>
<reference key="1">
    <citation type="journal article" date="2011" name="Proc. Natl. Acad. Sci. U.S.A.">
        <title>Genomic anatomy of Escherichia coli O157:H7 outbreaks.</title>
        <authorList>
            <person name="Eppinger M."/>
            <person name="Mammel M.K."/>
            <person name="Leclerc J.E."/>
            <person name="Ravel J."/>
            <person name="Cebula T.A."/>
        </authorList>
    </citation>
    <scope>NUCLEOTIDE SEQUENCE [LARGE SCALE GENOMIC DNA]</scope>
    <source>
        <strain>EC4115 / EHEC</strain>
    </source>
</reference>
<name>DAPA_ECO5E</name>
<organism>
    <name type="scientific">Escherichia coli O157:H7 (strain EC4115 / EHEC)</name>
    <dbReference type="NCBI Taxonomy" id="444450"/>
    <lineage>
        <taxon>Bacteria</taxon>
        <taxon>Pseudomonadati</taxon>
        <taxon>Pseudomonadota</taxon>
        <taxon>Gammaproteobacteria</taxon>
        <taxon>Enterobacterales</taxon>
        <taxon>Enterobacteriaceae</taxon>
        <taxon>Escherichia</taxon>
    </lineage>
</organism>
<evidence type="ECO:0000255" key="1">
    <source>
        <dbReference type="HAMAP-Rule" id="MF_00418"/>
    </source>
</evidence>
<evidence type="ECO:0000305" key="2"/>
<accession>B5Z015</accession>